<reference key="1">
    <citation type="journal article" date="2004" name="Nucleic Acids Res.">
        <title>Genome sequence of Symbiobacterium thermophilum, an uncultivable bacterium that depends on microbial commensalism.</title>
        <authorList>
            <person name="Ueda K."/>
            <person name="Yamashita A."/>
            <person name="Ishikawa J."/>
            <person name="Shimada M."/>
            <person name="Watsuji T."/>
            <person name="Morimura K."/>
            <person name="Ikeda H."/>
            <person name="Hattori M."/>
            <person name="Beppu T."/>
        </authorList>
    </citation>
    <scope>NUCLEOTIDE SEQUENCE [LARGE SCALE GENOMIC DNA]</scope>
    <source>
        <strain>DSM 24528 / JCM 14929 / IAM 14863 / T</strain>
    </source>
</reference>
<dbReference type="EMBL" id="AP006840">
    <property type="protein sequence ID" value="BAD39499.1"/>
    <property type="molecule type" value="Genomic_DNA"/>
</dbReference>
<dbReference type="RefSeq" id="WP_011194648.1">
    <property type="nucleotide sequence ID" value="NC_006177.1"/>
</dbReference>
<dbReference type="SMR" id="Q67S44"/>
<dbReference type="STRING" id="292459.STH514"/>
<dbReference type="KEGG" id="sth:STH514"/>
<dbReference type="eggNOG" id="COG0828">
    <property type="taxonomic scope" value="Bacteria"/>
</dbReference>
<dbReference type="HOGENOM" id="CLU_159258_3_2_9"/>
<dbReference type="OrthoDB" id="9799244at2"/>
<dbReference type="Proteomes" id="UP000000417">
    <property type="component" value="Chromosome"/>
</dbReference>
<dbReference type="GO" id="GO:1990904">
    <property type="term" value="C:ribonucleoprotein complex"/>
    <property type="evidence" value="ECO:0007669"/>
    <property type="project" value="UniProtKB-KW"/>
</dbReference>
<dbReference type="GO" id="GO:0005840">
    <property type="term" value="C:ribosome"/>
    <property type="evidence" value="ECO:0007669"/>
    <property type="project" value="UniProtKB-KW"/>
</dbReference>
<dbReference type="GO" id="GO:0003735">
    <property type="term" value="F:structural constituent of ribosome"/>
    <property type="evidence" value="ECO:0007669"/>
    <property type="project" value="InterPro"/>
</dbReference>
<dbReference type="GO" id="GO:0006412">
    <property type="term" value="P:translation"/>
    <property type="evidence" value="ECO:0007669"/>
    <property type="project" value="UniProtKB-UniRule"/>
</dbReference>
<dbReference type="Gene3D" id="1.20.5.1150">
    <property type="entry name" value="Ribosomal protein S8"/>
    <property type="match status" value="1"/>
</dbReference>
<dbReference type="HAMAP" id="MF_00358">
    <property type="entry name" value="Ribosomal_bS21"/>
    <property type="match status" value="1"/>
</dbReference>
<dbReference type="InterPro" id="IPR001911">
    <property type="entry name" value="Ribosomal_bS21"/>
</dbReference>
<dbReference type="InterPro" id="IPR018278">
    <property type="entry name" value="Ribosomal_bS21_CS"/>
</dbReference>
<dbReference type="InterPro" id="IPR038380">
    <property type="entry name" value="Ribosomal_bS21_sf"/>
</dbReference>
<dbReference type="NCBIfam" id="TIGR00030">
    <property type="entry name" value="S21p"/>
    <property type="match status" value="1"/>
</dbReference>
<dbReference type="PANTHER" id="PTHR21109">
    <property type="entry name" value="MITOCHONDRIAL 28S RIBOSOMAL PROTEIN S21"/>
    <property type="match status" value="1"/>
</dbReference>
<dbReference type="PANTHER" id="PTHR21109:SF22">
    <property type="entry name" value="SMALL RIBOSOMAL SUBUNIT PROTEIN BS21"/>
    <property type="match status" value="1"/>
</dbReference>
<dbReference type="Pfam" id="PF01165">
    <property type="entry name" value="Ribosomal_S21"/>
    <property type="match status" value="1"/>
</dbReference>
<dbReference type="PRINTS" id="PR00976">
    <property type="entry name" value="RIBOSOMALS21"/>
</dbReference>
<dbReference type="PROSITE" id="PS01181">
    <property type="entry name" value="RIBOSOMAL_S21"/>
    <property type="match status" value="1"/>
</dbReference>
<proteinExistence type="inferred from homology"/>
<comment type="similarity">
    <text evidence="1">Belongs to the bacterial ribosomal protein bS21 family.</text>
</comment>
<protein>
    <recommendedName>
        <fullName evidence="1">Small ribosomal subunit protein bS21</fullName>
    </recommendedName>
    <alternativeName>
        <fullName evidence="3">30S ribosomal protein S21</fullName>
    </alternativeName>
</protein>
<evidence type="ECO:0000255" key="1">
    <source>
        <dbReference type="HAMAP-Rule" id="MF_00358"/>
    </source>
</evidence>
<evidence type="ECO:0000256" key="2">
    <source>
        <dbReference type="SAM" id="MobiDB-lite"/>
    </source>
</evidence>
<evidence type="ECO:0000305" key="3"/>
<feature type="chain" id="PRO_0000178390" description="Small ribosomal subunit protein bS21">
    <location>
        <begin position="1"/>
        <end position="58"/>
    </location>
</feature>
<feature type="region of interest" description="Disordered" evidence="2">
    <location>
        <begin position="36"/>
        <end position="58"/>
    </location>
</feature>
<feature type="compositionally biased region" description="Basic residues" evidence="2">
    <location>
        <begin position="43"/>
        <end position="58"/>
    </location>
</feature>
<accession>Q67S44</accession>
<keyword id="KW-1185">Reference proteome</keyword>
<keyword id="KW-0687">Ribonucleoprotein</keyword>
<keyword id="KW-0689">Ribosomal protein</keyword>
<gene>
    <name evidence="1" type="primary">rpsU</name>
    <name type="ordered locus">STH514</name>
</gene>
<organism>
    <name type="scientific">Symbiobacterium thermophilum (strain DSM 24528 / JCM 14929 / IAM 14863 / T)</name>
    <dbReference type="NCBI Taxonomy" id="292459"/>
    <lineage>
        <taxon>Bacteria</taxon>
        <taxon>Bacillati</taxon>
        <taxon>Bacillota</taxon>
        <taxon>Clostridia</taxon>
        <taxon>Eubacteriales</taxon>
        <taxon>Symbiobacteriaceae</taxon>
        <taxon>Symbiobacterium</taxon>
    </lineage>
</organism>
<name>RS21_SYMTH</name>
<sequence>MSEVKIGKNESLDSALRRFKRQLQRAGVLAEIRKREHYEKPSVKRKKKSEAARRRKYR</sequence>